<dbReference type="EMBL" id="CP000142">
    <property type="protein sequence ID" value="ABA88756.1"/>
    <property type="molecule type" value="Genomic_DNA"/>
</dbReference>
<dbReference type="RefSeq" id="WP_011341239.1">
    <property type="nucleotide sequence ID" value="NC_007498.2"/>
</dbReference>
<dbReference type="SMR" id="Q3A4F1"/>
<dbReference type="STRING" id="338963.Pcar_1510"/>
<dbReference type="KEGG" id="pca:Pcar_1510"/>
<dbReference type="eggNOG" id="COG0249">
    <property type="taxonomic scope" value="Bacteria"/>
</dbReference>
<dbReference type="HOGENOM" id="CLU_002472_4_0_7"/>
<dbReference type="OrthoDB" id="9802448at2"/>
<dbReference type="Proteomes" id="UP000002534">
    <property type="component" value="Chromosome"/>
</dbReference>
<dbReference type="GO" id="GO:0005829">
    <property type="term" value="C:cytosol"/>
    <property type="evidence" value="ECO:0007669"/>
    <property type="project" value="TreeGrafter"/>
</dbReference>
<dbReference type="GO" id="GO:0005524">
    <property type="term" value="F:ATP binding"/>
    <property type="evidence" value="ECO:0007669"/>
    <property type="project" value="UniProtKB-UniRule"/>
</dbReference>
<dbReference type="GO" id="GO:0140664">
    <property type="term" value="F:ATP-dependent DNA damage sensor activity"/>
    <property type="evidence" value="ECO:0007669"/>
    <property type="project" value="InterPro"/>
</dbReference>
<dbReference type="GO" id="GO:0003684">
    <property type="term" value="F:damaged DNA binding"/>
    <property type="evidence" value="ECO:0007669"/>
    <property type="project" value="UniProtKB-UniRule"/>
</dbReference>
<dbReference type="GO" id="GO:0030983">
    <property type="term" value="F:mismatched DNA binding"/>
    <property type="evidence" value="ECO:0007669"/>
    <property type="project" value="InterPro"/>
</dbReference>
<dbReference type="GO" id="GO:0006298">
    <property type="term" value="P:mismatch repair"/>
    <property type="evidence" value="ECO:0007669"/>
    <property type="project" value="UniProtKB-UniRule"/>
</dbReference>
<dbReference type="CDD" id="cd03284">
    <property type="entry name" value="ABC_MutS1"/>
    <property type="match status" value="1"/>
</dbReference>
<dbReference type="FunFam" id="1.10.1420.10:FF:000001">
    <property type="entry name" value="DNA mismatch repair protein MutS"/>
    <property type="match status" value="1"/>
</dbReference>
<dbReference type="FunFam" id="3.40.1170.10:FF:000001">
    <property type="entry name" value="DNA mismatch repair protein MutS"/>
    <property type="match status" value="1"/>
</dbReference>
<dbReference type="FunFam" id="3.40.50.300:FF:000870">
    <property type="entry name" value="MutS protein homolog 4"/>
    <property type="match status" value="1"/>
</dbReference>
<dbReference type="Gene3D" id="1.10.1420.10">
    <property type="match status" value="2"/>
</dbReference>
<dbReference type="Gene3D" id="3.40.1170.10">
    <property type="entry name" value="DNA repair protein MutS, domain I"/>
    <property type="match status" value="1"/>
</dbReference>
<dbReference type="Gene3D" id="3.30.420.110">
    <property type="entry name" value="MutS, connector domain"/>
    <property type="match status" value="1"/>
</dbReference>
<dbReference type="Gene3D" id="3.40.50.300">
    <property type="entry name" value="P-loop containing nucleotide triphosphate hydrolases"/>
    <property type="match status" value="1"/>
</dbReference>
<dbReference type="HAMAP" id="MF_00096">
    <property type="entry name" value="MutS"/>
    <property type="match status" value="1"/>
</dbReference>
<dbReference type="InterPro" id="IPR005748">
    <property type="entry name" value="DNA_mismatch_repair_MutS"/>
</dbReference>
<dbReference type="InterPro" id="IPR007695">
    <property type="entry name" value="DNA_mismatch_repair_MutS-lik_N"/>
</dbReference>
<dbReference type="InterPro" id="IPR017261">
    <property type="entry name" value="DNA_mismatch_repair_MutS/MSH"/>
</dbReference>
<dbReference type="InterPro" id="IPR000432">
    <property type="entry name" value="DNA_mismatch_repair_MutS_C"/>
</dbReference>
<dbReference type="InterPro" id="IPR007861">
    <property type="entry name" value="DNA_mismatch_repair_MutS_clamp"/>
</dbReference>
<dbReference type="InterPro" id="IPR007696">
    <property type="entry name" value="DNA_mismatch_repair_MutS_core"/>
</dbReference>
<dbReference type="InterPro" id="IPR016151">
    <property type="entry name" value="DNA_mismatch_repair_MutS_N"/>
</dbReference>
<dbReference type="InterPro" id="IPR036187">
    <property type="entry name" value="DNA_mismatch_repair_MutS_sf"/>
</dbReference>
<dbReference type="InterPro" id="IPR007860">
    <property type="entry name" value="DNA_mmatch_repair_MutS_con_dom"/>
</dbReference>
<dbReference type="InterPro" id="IPR045076">
    <property type="entry name" value="MutS"/>
</dbReference>
<dbReference type="InterPro" id="IPR036678">
    <property type="entry name" value="MutS_con_dom_sf"/>
</dbReference>
<dbReference type="InterPro" id="IPR027417">
    <property type="entry name" value="P-loop_NTPase"/>
</dbReference>
<dbReference type="NCBIfam" id="TIGR01070">
    <property type="entry name" value="mutS1"/>
    <property type="match status" value="1"/>
</dbReference>
<dbReference type="NCBIfam" id="NF003810">
    <property type="entry name" value="PRK05399.1"/>
    <property type="match status" value="1"/>
</dbReference>
<dbReference type="PANTHER" id="PTHR11361:SF34">
    <property type="entry name" value="DNA MISMATCH REPAIR PROTEIN MSH1, MITOCHONDRIAL"/>
    <property type="match status" value="1"/>
</dbReference>
<dbReference type="PANTHER" id="PTHR11361">
    <property type="entry name" value="DNA MISMATCH REPAIR PROTEIN MUTS FAMILY MEMBER"/>
    <property type="match status" value="1"/>
</dbReference>
<dbReference type="Pfam" id="PF01624">
    <property type="entry name" value="MutS_I"/>
    <property type="match status" value="1"/>
</dbReference>
<dbReference type="Pfam" id="PF05188">
    <property type="entry name" value="MutS_II"/>
    <property type="match status" value="1"/>
</dbReference>
<dbReference type="Pfam" id="PF05192">
    <property type="entry name" value="MutS_III"/>
    <property type="match status" value="1"/>
</dbReference>
<dbReference type="Pfam" id="PF05190">
    <property type="entry name" value="MutS_IV"/>
    <property type="match status" value="1"/>
</dbReference>
<dbReference type="Pfam" id="PF00488">
    <property type="entry name" value="MutS_V"/>
    <property type="match status" value="1"/>
</dbReference>
<dbReference type="PIRSF" id="PIRSF037677">
    <property type="entry name" value="DNA_mis_repair_Msh6"/>
    <property type="match status" value="1"/>
</dbReference>
<dbReference type="SMART" id="SM00534">
    <property type="entry name" value="MUTSac"/>
    <property type="match status" value="1"/>
</dbReference>
<dbReference type="SMART" id="SM00533">
    <property type="entry name" value="MUTSd"/>
    <property type="match status" value="1"/>
</dbReference>
<dbReference type="SUPFAM" id="SSF55271">
    <property type="entry name" value="DNA repair protein MutS, domain I"/>
    <property type="match status" value="1"/>
</dbReference>
<dbReference type="SUPFAM" id="SSF53150">
    <property type="entry name" value="DNA repair protein MutS, domain II"/>
    <property type="match status" value="1"/>
</dbReference>
<dbReference type="SUPFAM" id="SSF48334">
    <property type="entry name" value="DNA repair protein MutS, domain III"/>
    <property type="match status" value="1"/>
</dbReference>
<dbReference type="SUPFAM" id="SSF52540">
    <property type="entry name" value="P-loop containing nucleoside triphosphate hydrolases"/>
    <property type="match status" value="1"/>
</dbReference>
<dbReference type="PROSITE" id="PS00486">
    <property type="entry name" value="DNA_MISMATCH_REPAIR_2"/>
    <property type="match status" value="1"/>
</dbReference>
<accession>Q3A4F1</accession>
<organism>
    <name type="scientific">Syntrophotalea carbinolica (strain DSM 2380 / NBRC 103641 / GraBd1)</name>
    <name type="common">Pelobacter carbinolicus</name>
    <dbReference type="NCBI Taxonomy" id="338963"/>
    <lineage>
        <taxon>Bacteria</taxon>
        <taxon>Pseudomonadati</taxon>
        <taxon>Thermodesulfobacteriota</taxon>
        <taxon>Desulfuromonadia</taxon>
        <taxon>Desulfuromonadales</taxon>
        <taxon>Syntrophotaleaceae</taxon>
        <taxon>Syntrophotalea</taxon>
    </lineage>
</organism>
<gene>
    <name evidence="1" type="primary">mutS</name>
    <name type="ordered locus">Pcar_1510</name>
</gene>
<protein>
    <recommendedName>
        <fullName evidence="1">DNA mismatch repair protein MutS</fullName>
    </recommendedName>
</protein>
<reference key="1">
    <citation type="submission" date="2005-10" db="EMBL/GenBank/DDBJ databases">
        <title>Complete sequence of Pelobacter carbinolicus DSM 2380.</title>
        <authorList>
            <person name="Copeland A."/>
            <person name="Lucas S."/>
            <person name="Lapidus A."/>
            <person name="Barry K."/>
            <person name="Detter J.C."/>
            <person name="Glavina T."/>
            <person name="Hammon N."/>
            <person name="Israni S."/>
            <person name="Pitluck S."/>
            <person name="Chertkov O."/>
            <person name="Schmutz J."/>
            <person name="Larimer F."/>
            <person name="Land M."/>
            <person name="Kyrpides N."/>
            <person name="Ivanova N."/>
            <person name="Richardson P."/>
        </authorList>
    </citation>
    <scope>NUCLEOTIDE SEQUENCE [LARGE SCALE GENOMIC DNA]</scope>
    <source>
        <strain>DSM 2380 / NBRC 103641 / GraBd1</strain>
    </source>
</reference>
<keyword id="KW-0067">ATP-binding</keyword>
<keyword id="KW-0227">DNA damage</keyword>
<keyword id="KW-0234">DNA repair</keyword>
<keyword id="KW-0238">DNA-binding</keyword>
<keyword id="KW-0547">Nucleotide-binding</keyword>
<keyword id="KW-1185">Reference proteome</keyword>
<feature type="chain" id="PRO_0000224388" description="DNA mismatch repair protein MutS">
    <location>
        <begin position="1"/>
        <end position="870"/>
    </location>
</feature>
<feature type="binding site" evidence="1">
    <location>
        <begin position="620"/>
        <end position="627"/>
    </location>
    <ligand>
        <name>ATP</name>
        <dbReference type="ChEBI" id="CHEBI:30616"/>
    </ligand>
</feature>
<sequence length="870" mass="96865">MTKLTPMMRQYLDIKAQYPDAILFFRLGDFYEMFMEDAVTASRILDITLTSRNKGAAEEVPLCGIPYHSCQPYVARLVEAGHKVAICEQVEDPKTVKGIVKREVVRVVTPGLVVDADTLTPKENNFLAAIAVSAQERYGIAVLDITTGEFRVTEVEGREAACSEVVSLQPREILVSEDQQQFCEQLLQGASGSWLINPLPDWVCDLEACGQRLQSFFNCGSLESFGCARLPEAVRAAGGVVYYVEQTQKGVAGHIRPLVTYHSRDYMVLDNSTRRNLELTATLQDGGRKGSLLGVLDRTVTAMGGRKIRQWIHHPLVDLKAIRDRHLSVQELVGQSLVRGDLRADLDGVYDLERLNSKIAMGHANAKDLVALRKSFEKLPRILQHLDELSAPLAAGIGSRIDPLTDMAELIGRAIVEDPPFVLREGGLMCDGYHLELDELRDIRRNGKEWIAKLEADERERTGIGSLKVRFNKVFGYYIEVTRTHLGRVPEDYQRKQTLANAERFFTPQLKEYEEKVLGAEDRLFDLEFELFQDLRERVAEQGERVQRTAEALAELDVLLSLADVAHSCDYVCPTMDDSDRLVIRDGRHPVIEAMNLGEHFVPNDVEMDCRENQIMVITGPNMAGKSTYMRQVALITLMAHMGSLVPAASAHIGLVDRIFTRVGASDNLAQGQSTFMVEMTEAAHILNHATSRSLIVLDEIGRGTSTFDGISIAWAVAEYLHDNGHVAAKTLFATHYHELTDLILTCERVKNLNIAVREWNEQIIFLRKIVKGPASHSYGIQVARLAGLPVAVIDRAKEILVNLESGELAEEGQPRLAQRAGGGQHRPNPQMSLFDAAADPVREKLAALDISTISPLEGLNFLHELQKLV</sequence>
<evidence type="ECO:0000255" key="1">
    <source>
        <dbReference type="HAMAP-Rule" id="MF_00096"/>
    </source>
</evidence>
<proteinExistence type="inferred from homology"/>
<comment type="function">
    <text evidence="1">This protein is involved in the repair of mismatches in DNA. It is possible that it carries out the mismatch recognition step. This protein has a weak ATPase activity.</text>
</comment>
<comment type="similarity">
    <text evidence="1">Belongs to the DNA mismatch repair MutS family.</text>
</comment>
<name>MUTS_SYNC1</name>